<dbReference type="EC" id="3.2.1.55"/>
<dbReference type="EMBL" id="AL009126">
    <property type="protein sequence ID" value="CAB13699.1"/>
    <property type="molecule type" value="Genomic_DNA"/>
</dbReference>
<dbReference type="PIR" id="H69735">
    <property type="entry name" value="H69735"/>
</dbReference>
<dbReference type="RefSeq" id="NP_389698.1">
    <property type="nucleotide sequence ID" value="NC_000964.3"/>
</dbReference>
<dbReference type="RefSeq" id="WP_003245027.1">
    <property type="nucleotide sequence ID" value="NZ_OZ025638.1"/>
</dbReference>
<dbReference type="PDB" id="3C7E">
    <property type="method" value="X-ray"/>
    <property type="resolution" value="2.00 A"/>
    <property type="chains" value="A=27-513"/>
</dbReference>
<dbReference type="PDB" id="3C7F">
    <property type="method" value="X-ray"/>
    <property type="resolution" value="1.55 A"/>
    <property type="chains" value="A=27-513"/>
</dbReference>
<dbReference type="PDB" id="3C7G">
    <property type="method" value="X-ray"/>
    <property type="resolution" value="2.02 A"/>
    <property type="chains" value="A=27-513"/>
</dbReference>
<dbReference type="PDB" id="3C7H">
    <property type="method" value="X-ray"/>
    <property type="resolution" value="2.00 A"/>
    <property type="chains" value="A=27-513"/>
</dbReference>
<dbReference type="PDB" id="3C7O">
    <property type="method" value="X-ray"/>
    <property type="resolution" value="1.80 A"/>
    <property type="chains" value="A=27-513"/>
</dbReference>
<dbReference type="PDBsum" id="3C7E"/>
<dbReference type="PDBsum" id="3C7F"/>
<dbReference type="PDBsum" id="3C7G"/>
<dbReference type="PDBsum" id="3C7H"/>
<dbReference type="PDBsum" id="3C7O"/>
<dbReference type="SMR" id="Q45071"/>
<dbReference type="FunCoup" id="Q45071">
    <property type="interactions" value="48"/>
</dbReference>
<dbReference type="STRING" id="224308.BSU18160"/>
<dbReference type="CAZy" id="CBM6">
    <property type="family name" value="Carbohydrate-Binding Module Family 6"/>
</dbReference>
<dbReference type="CAZy" id="GH43">
    <property type="family name" value="Glycoside Hydrolase Family 43"/>
</dbReference>
<dbReference type="PaxDb" id="224308-BSU18160"/>
<dbReference type="EnsemblBacteria" id="CAB13699">
    <property type="protein sequence ID" value="CAB13699"/>
    <property type="gene ID" value="BSU_18160"/>
</dbReference>
<dbReference type="GeneID" id="936433"/>
<dbReference type="KEGG" id="bsu:BSU18160"/>
<dbReference type="PATRIC" id="fig|224308.179.peg.1980"/>
<dbReference type="eggNOG" id="COG3507">
    <property type="taxonomic scope" value="Bacteria"/>
</dbReference>
<dbReference type="InParanoid" id="Q45071"/>
<dbReference type="OrthoDB" id="9801455at2"/>
<dbReference type="PhylomeDB" id="Q45071"/>
<dbReference type="BioCyc" id="BSUB:BSU18160-MONOMER"/>
<dbReference type="BioCyc" id="MetaCyc:BSU18160-MONOMER"/>
<dbReference type="BRENDA" id="3.2.1.55">
    <property type="organism ID" value="658"/>
</dbReference>
<dbReference type="UniPathway" id="UPA00114"/>
<dbReference type="EvolutionaryTrace" id="Q45071"/>
<dbReference type="Proteomes" id="UP000001570">
    <property type="component" value="Chromosome"/>
</dbReference>
<dbReference type="GO" id="GO:0005576">
    <property type="term" value="C:extracellular region"/>
    <property type="evidence" value="ECO:0007669"/>
    <property type="project" value="UniProtKB-SubCell"/>
</dbReference>
<dbReference type="GO" id="GO:0046556">
    <property type="term" value="F:alpha-L-arabinofuranosidase activity"/>
    <property type="evidence" value="ECO:0007669"/>
    <property type="project" value="UniProtKB-EC"/>
</dbReference>
<dbReference type="GO" id="GO:0030246">
    <property type="term" value="F:carbohydrate binding"/>
    <property type="evidence" value="ECO:0007669"/>
    <property type="project" value="InterPro"/>
</dbReference>
<dbReference type="GO" id="GO:0046872">
    <property type="term" value="F:metal ion binding"/>
    <property type="evidence" value="ECO:0007669"/>
    <property type="project" value="UniProtKB-KW"/>
</dbReference>
<dbReference type="GO" id="GO:0045493">
    <property type="term" value="P:xylan catabolic process"/>
    <property type="evidence" value="ECO:0007669"/>
    <property type="project" value="UniProtKB-UniPathway"/>
</dbReference>
<dbReference type="CDD" id="cd04084">
    <property type="entry name" value="CBM6_xylanase-like"/>
    <property type="match status" value="1"/>
</dbReference>
<dbReference type="CDD" id="cd09003">
    <property type="entry name" value="GH43_XynD-like"/>
    <property type="match status" value="1"/>
</dbReference>
<dbReference type="Gene3D" id="2.60.120.260">
    <property type="entry name" value="Galactose-binding domain-like"/>
    <property type="match status" value="1"/>
</dbReference>
<dbReference type="Gene3D" id="2.115.10.20">
    <property type="entry name" value="Glycosyl hydrolase domain, family 43"/>
    <property type="match status" value="1"/>
</dbReference>
<dbReference type="InterPro" id="IPR005084">
    <property type="entry name" value="CBM6"/>
</dbReference>
<dbReference type="InterPro" id="IPR006584">
    <property type="entry name" value="Cellulose-bd_IV"/>
</dbReference>
<dbReference type="InterPro" id="IPR008979">
    <property type="entry name" value="Galactose-bd-like_sf"/>
</dbReference>
<dbReference type="InterPro" id="IPR006710">
    <property type="entry name" value="Glyco_hydro_43"/>
</dbReference>
<dbReference type="InterPro" id="IPR023296">
    <property type="entry name" value="Glyco_hydro_beta-prop_sf"/>
</dbReference>
<dbReference type="InterPro" id="IPR052176">
    <property type="entry name" value="Glycosyl_Hydrlase_43_Enz"/>
</dbReference>
<dbReference type="PANTHER" id="PTHR43772">
    <property type="entry name" value="ENDO-1,4-BETA-XYLANASE"/>
    <property type="match status" value="1"/>
</dbReference>
<dbReference type="PANTHER" id="PTHR43772:SF2">
    <property type="entry name" value="PUTATIVE (AFU_ORTHOLOGUE AFUA_2G04480)-RELATED"/>
    <property type="match status" value="1"/>
</dbReference>
<dbReference type="Pfam" id="PF03422">
    <property type="entry name" value="CBM_6"/>
    <property type="match status" value="1"/>
</dbReference>
<dbReference type="Pfam" id="PF04616">
    <property type="entry name" value="Glyco_hydro_43"/>
    <property type="match status" value="1"/>
</dbReference>
<dbReference type="SMART" id="SM00606">
    <property type="entry name" value="CBD_IV"/>
    <property type="match status" value="1"/>
</dbReference>
<dbReference type="SUPFAM" id="SSF75005">
    <property type="entry name" value="Arabinanase/levansucrase/invertase"/>
    <property type="match status" value="1"/>
</dbReference>
<dbReference type="SUPFAM" id="SSF49785">
    <property type="entry name" value="Galactose-binding domain-like"/>
    <property type="match status" value="1"/>
</dbReference>
<dbReference type="PROSITE" id="PS51175">
    <property type="entry name" value="CBM6"/>
    <property type="match status" value="1"/>
</dbReference>
<name>XYND_BACSU</name>
<organism>
    <name type="scientific">Bacillus subtilis (strain 168)</name>
    <dbReference type="NCBI Taxonomy" id="224308"/>
    <lineage>
        <taxon>Bacteria</taxon>
        <taxon>Bacillati</taxon>
        <taxon>Bacillota</taxon>
        <taxon>Bacilli</taxon>
        <taxon>Bacillales</taxon>
        <taxon>Bacillaceae</taxon>
        <taxon>Bacillus</taxon>
    </lineage>
</organism>
<proteinExistence type="evidence at protein level"/>
<protein>
    <recommendedName>
        <fullName>Arabinoxylan arabinofuranohydrolase</fullName>
        <shortName>AXH</shortName>
        <ecNumber>3.2.1.55</ecNumber>
    </recommendedName>
    <alternativeName>
        <fullName>AXH-m2,3</fullName>
        <shortName>AXH-m23</shortName>
    </alternativeName>
    <alternativeName>
        <fullName>Alpha-L-arabinofuranosidase</fullName>
        <shortName>AF</shortName>
    </alternativeName>
</protein>
<evidence type="ECO:0000255" key="1">
    <source>
        <dbReference type="PROSITE-ProRule" id="PRU00523"/>
    </source>
</evidence>
<evidence type="ECO:0000269" key="2">
    <source>
    </source>
</evidence>
<evidence type="ECO:0000269" key="3">
    <source>
    </source>
</evidence>
<evidence type="ECO:0000269" key="4">
    <source>
    </source>
</evidence>
<evidence type="ECO:0000305" key="5"/>
<evidence type="ECO:0000305" key="6">
    <source>
    </source>
</evidence>
<evidence type="ECO:0007829" key="7">
    <source>
        <dbReference type="PDB" id="3C7F"/>
    </source>
</evidence>
<evidence type="ECO:0007829" key="8">
    <source>
        <dbReference type="PDB" id="3C7G"/>
    </source>
</evidence>
<evidence type="ECO:0007829" key="9">
    <source>
        <dbReference type="PDB" id="3C7O"/>
    </source>
</evidence>
<comment type="function">
    <text evidence="3">Cleaves arabinose units from O-2- or O-3-monosubstituted xylose residues, thereby assisting in arabinoxylan (AX) and short-chain arabinoxylo-oligosaccharide (AXOS) degradation. Is more active on wheat bran AXOS than on wheat water-extractable AX and rye water-extractable AX. Does not display endoxylanase, xylosidase or arabinanase activity.</text>
</comment>
<comment type="catalytic activity">
    <reaction>
        <text>Hydrolysis of terminal non-reducing alpha-L-arabinofuranoside residues in alpha-L-arabinosides.</text>
        <dbReference type="EC" id="3.2.1.55"/>
    </reaction>
</comment>
<comment type="biophysicochemical properties">
    <phDependence>
        <text evidence="3">Optimum pH is 5.6. Stable from pH 4.4 to 7.6.</text>
    </phDependence>
    <temperatureDependence>
        <text evidence="3">Optimum temperature is 45 degrees Celsius. Thermostable for 40 min from 4 to 45 degrees Celsius.</text>
    </temperatureDependence>
</comment>
<comment type="pathway">
    <text>Glycan degradation; xylan degradation.</text>
</comment>
<comment type="subcellular location">
    <subcellularLocation>
        <location evidence="2">Secreted</location>
    </subcellularLocation>
</comment>
<comment type="domain">
    <text>The CBM6 domain lost its carbohydrate binding capacity.</text>
</comment>
<comment type="mass spectrometry"/>
<comment type="similarity">
    <text evidence="5">Belongs to the glycosyl hydrolase 43 family.</text>
</comment>
<feature type="signal peptide" evidence="2">
    <location>
        <begin position="1"/>
        <end position="26"/>
    </location>
</feature>
<feature type="chain" id="PRO_0000360828" description="Arabinoxylan arabinofuranohydrolase">
    <location>
        <begin position="27"/>
        <end position="513"/>
    </location>
</feature>
<feature type="domain" description="CBM6" evidence="1">
    <location>
        <begin position="382"/>
        <end position="511"/>
    </location>
</feature>
<feature type="active site" description="Proton acceptor" evidence="6">
    <location>
        <position position="50"/>
    </location>
</feature>
<feature type="active site" description="Proton donor" evidence="6">
    <location>
        <position position="251"/>
    </location>
</feature>
<feature type="binding site" evidence="4">
    <location>
        <position position="314"/>
    </location>
    <ligand>
        <name>substrate</name>
    </ligand>
</feature>
<feature type="binding site" evidence="4">
    <location>
        <position position="385"/>
    </location>
    <ligand>
        <name>Ca(2+)</name>
        <dbReference type="ChEBI" id="CHEBI:29108"/>
        <note>structural</note>
    </ligand>
</feature>
<feature type="binding site" evidence="4">
    <location>
        <position position="387"/>
    </location>
    <ligand>
        <name>Ca(2+)</name>
        <dbReference type="ChEBI" id="CHEBI:29108"/>
        <note>structural</note>
    </ligand>
</feature>
<feature type="binding site" evidence="4">
    <location>
        <position position="409"/>
    </location>
    <ligand>
        <name>Ca(2+)</name>
        <dbReference type="ChEBI" id="CHEBI:29108"/>
        <note>structural</note>
    </ligand>
</feature>
<feature type="binding site" evidence="4">
    <location>
        <position position="410"/>
    </location>
    <ligand>
        <name>Ca(2+)</name>
        <dbReference type="ChEBI" id="CHEBI:29108"/>
        <note>structural</note>
    </ligand>
</feature>
<feature type="binding site" evidence="4">
    <location>
        <position position="506"/>
    </location>
    <ligand>
        <name>Ca(2+)</name>
        <dbReference type="ChEBI" id="CHEBI:29108"/>
        <note>structural</note>
    </ligand>
</feature>
<feature type="site" description="Important for catalytic activity, responsible for pKa modulation of the active site Glu and correct orientation of both the proton donor and substrate" evidence="6">
    <location>
        <position position="189"/>
    </location>
</feature>
<feature type="strand" evidence="7">
    <location>
        <begin position="32"/>
        <end position="34"/>
    </location>
</feature>
<feature type="strand" evidence="7">
    <location>
        <begin position="49"/>
        <end position="56"/>
    </location>
</feature>
<feature type="strand" evidence="7">
    <location>
        <begin position="59"/>
        <end position="65"/>
    </location>
</feature>
<feature type="strand" evidence="7">
    <location>
        <begin position="87"/>
        <end position="105"/>
    </location>
</feature>
<feature type="strand" evidence="8">
    <location>
        <begin position="110"/>
        <end position="112"/>
    </location>
</feature>
<feature type="helix" evidence="7">
    <location>
        <begin position="113"/>
        <end position="116"/>
    </location>
</feature>
<feature type="strand" evidence="7">
    <location>
        <begin position="127"/>
        <end position="136"/>
    </location>
</feature>
<feature type="strand" evidence="7">
    <location>
        <begin position="139"/>
        <end position="148"/>
    </location>
</feature>
<feature type="strand" evidence="7">
    <location>
        <begin position="153"/>
        <end position="160"/>
    </location>
</feature>
<feature type="strand" evidence="7">
    <location>
        <begin position="168"/>
        <end position="171"/>
    </location>
</feature>
<feature type="strand" evidence="7">
    <location>
        <begin position="185"/>
        <end position="187"/>
    </location>
</feature>
<feature type="strand" evidence="7">
    <location>
        <begin position="191"/>
        <end position="194"/>
    </location>
</feature>
<feature type="strand" evidence="7">
    <location>
        <begin position="200"/>
        <end position="205"/>
    </location>
</feature>
<feature type="helix" evidence="7">
    <location>
        <begin position="216"/>
        <end position="220"/>
    </location>
</feature>
<feature type="strand" evidence="7">
    <location>
        <begin position="225"/>
        <end position="230"/>
    </location>
</feature>
<feature type="strand" evidence="7">
    <location>
        <begin position="234"/>
        <end position="244"/>
    </location>
</feature>
<feature type="strand" evidence="7">
    <location>
        <begin position="249"/>
        <end position="258"/>
    </location>
</feature>
<feature type="strand" evidence="7">
    <location>
        <begin position="261"/>
        <end position="268"/>
    </location>
</feature>
<feature type="strand" evidence="7">
    <location>
        <begin position="270"/>
        <end position="272"/>
    </location>
</feature>
<feature type="strand" evidence="7">
    <location>
        <begin position="282"/>
        <end position="290"/>
    </location>
</feature>
<feature type="strand" evidence="7">
    <location>
        <begin position="296"/>
        <end position="302"/>
    </location>
</feature>
<feature type="helix" evidence="7">
    <location>
        <begin position="305"/>
        <end position="309"/>
    </location>
</feature>
<feature type="strand" evidence="7">
    <location>
        <begin position="317"/>
        <end position="322"/>
    </location>
</feature>
<feature type="strand" evidence="7">
    <location>
        <begin position="325"/>
        <end position="333"/>
    </location>
</feature>
<feature type="helix" evidence="7">
    <location>
        <begin position="334"/>
        <end position="340"/>
    </location>
</feature>
<feature type="strand" evidence="7">
    <location>
        <begin position="348"/>
        <end position="353"/>
    </location>
</feature>
<feature type="strand" evidence="7">
    <location>
        <begin position="388"/>
        <end position="394"/>
    </location>
</feature>
<feature type="strand" evidence="7">
    <location>
        <begin position="396"/>
        <end position="399"/>
    </location>
</feature>
<feature type="strand" evidence="7">
    <location>
        <begin position="410"/>
        <end position="413"/>
    </location>
</feature>
<feature type="strand" evidence="7">
    <location>
        <begin position="420"/>
        <end position="427"/>
    </location>
</feature>
<feature type="turn" evidence="7">
    <location>
        <begin position="429"/>
        <end position="431"/>
    </location>
</feature>
<feature type="strand" evidence="7">
    <location>
        <begin position="433"/>
        <end position="441"/>
    </location>
</feature>
<feature type="strand" evidence="7">
    <location>
        <begin position="446"/>
        <end position="454"/>
    </location>
</feature>
<feature type="strand" evidence="7">
    <location>
        <begin position="459"/>
        <end position="465"/>
    </location>
</feature>
<feature type="strand" evidence="7">
    <location>
        <begin position="475"/>
        <end position="480"/>
    </location>
</feature>
<feature type="strand" evidence="7">
    <location>
        <begin position="486"/>
        <end position="495"/>
    </location>
</feature>
<feature type="strand" evidence="9">
    <location>
        <begin position="497"/>
        <end position="500"/>
    </location>
</feature>
<feature type="strand" evidence="7">
    <location>
        <begin position="504"/>
        <end position="512"/>
    </location>
</feature>
<accession>Q45071</accession>
<gene>
    <name type="primary">xynD</name>
    <name type="ordered locus">BSU18160</name>
</gene>
<reference key="1">
    <citation type="journal article" date="1997" name="Nature">
        <title>The complete genome sequence of the Gram-positive bacterium Bacillus subtilis.</title>
        <authorList>
            <person name="Kunst F."/>
            <person name="Ogasawara N."/>
            <person name="Moszer I."/>
            <person name="Albertini A.M."/>
            <person name="Alloni G."/>
            <person name="Azevedo V."/>
            <person name="Bertero M.G."/>
            <person name="Bessieres P."/>
            <person name="Bolotin A."/>
            <person name="Borchert S."/>
            <person name="Borriss R."/>
            <person name="Boursier L."/>
            <person name="Brans A."/>
            <person name="Braun M."/>
            <person name="Brignell S.C."/>
            <person name="Bron S."/>
            <person name="Brouillet S."/>
            <person name="Bruschi C.V."/>
            <person name="Caldwell B."/>
            <person name="Capuano V."/>
            <person name="Carter N.M."/>
            <person name="Choi S.-K."/>
            <person name="Codani J.-J."/>
            <person name="Connerton I.F."/>
            <person name="Cummings N.J."/>
            <person name="Daniel R.A."/>
            <person name="Denizot F."/>
            <person name="Devine K.M."/>
            <person name="Duesterhoeft A."/>
            <person name="Ehrlich S.D."/>
            <person name="Emmerson P.T."/>
            <person name="Entian K.-D."/>
            <person name="Errington J."/>
            <person name="Fabret C."/>
            <person name="Ferrari E."/>
            <person name="Foulger D."/>
            <person name="Fritz C."/>
            <person name="Fujita M."/>
            <person name="Fujita Y."/>
            <person name="Fuma S."/>
            <person name="Galizzi A."/>
            <person name="Galleron N."/>
            <person name="Ghim S.-Y."/>
            <person name="Glaser P."/>
            <person name="Goffeau A."/>
            <person name="Golightly E.J."/>
            <person name="Grandi G."/>
            <person name="Guiseppi G."/>
            <person name="Guy B.J."/>
            <person name="Haga K."/>
            <person name="Haiech J."/>
            <person name="Harwood C.R."/>
            <person name="Henaut A."/>
            <person name="Hilbert H."/>
            <person name="Holsappel S."/>
            <person name="Hosono S."/>
            <person name="Hullo M.-F."/>
            <person name="Itaya M."/>
            <person name="Jones L.-M."/>
            <person name="Joris B."/>
            <person name="Karamata D."/>
            <person name="Kasahara Y."/>
            <person name="Klaerr-Blanchard M."/>
            <person name="Klein C."/>
            <person name="Kobayashi Y."/>
            <person name="Koetter P."/>
            <person name="Koningstein G."/>
            <person name="Krogh S."/>
            <person name="Kumano M."/>
            <person name="Kurita K."/>
            <person name="Lapidus A."/>
            <person name="Lardinois S."/>
            <person name="Lauber J."/>
            <person name="Lazarevic V."/>
            <person name="Lee S.-M."/>
            <person name="Levine A."/>
            <person name="Liu H."/>
            <person name="Masuda S."/>
            <person name="Mauel C."/>
            <person name="Medigue C."/>
            <person name="Medina N."/>
            <person name="Mellado R.P."/>
            <person name="Mizuno M."/>
            <person name="Moestl D."/>
            <person name="Nakai S."/>
            <person name="Noback M."/>
            <person name="Noone D."/>
            <person name="O'Reilly M."/>
            <person name="Ogawa K."/>
            <person name="Ogiwara A."/>
            <person name="Oudega B."/>
            <person name="Park S.-H."/>
            <person name="Parro V."/>
            <person name="Pohl T.M."/>
            <person name="Portetelle D."/>
            <person name="Porwollik S."/>
            <person name="Prescott A.M."/>
            <person name="Presecan E."/>
            <person name="Pujic P."/>
            <person name="Purnelle B."/>
            <person name="Rapoport G."/>
            <person name="Rey M."/>
            <person name="Reynolds S."/>
            <person name="Rieger M."/>
            <person name="Rivolta C."/>
            <person name="Rocha E."/>
            <person name="Roche B."/>
            <person name="Rose M."/>
            <person name="Sadaie Y."/>
            <person name="Sato T."/>
            <person name="Scanlan E."/>
            <person name="Schleich S."/>
            <person name="Schroeter R."/>
            <person name="Scoffone F."/>
            <person name="Sekiguchi J."/>
            <person name="Sekowska A."/>
            <person name="Seror S.J."/>
            <person name="Serror P."/>
            <person name="Shin B.-S."/>
            <person name="Soldo B."/>
            <person name="Sorokin A."/>
            <person name="Tacconi E."/>
            <person name="Takagi T."/>
            <person name="Takahashi H."/>
            <person name="Takemaru K."/>
            <person name="Takeuchi M."/>
            <person name="Tamakoshi A."/>
            <person name="Tanaka T."/>
            <person name="Terpstra P."/>
            <person name="Tognoni A."/>
            <person name="Tosato V."/>
            <person name="Uchiyama S."/>
            <person name="Vandenbol M."/>
            <person name="Vannier F."/>
            <person name="Vassarotti A."/>
            <person name="Viari A."/>
            <person name="Wambutt R."/>
            <person name="Wedler E."/>
            <person name="Wedler H."/>
            <person name="Weitzenegger T."/>
            <person name="Winters P."/>
            <person name="Wipat A."/>
            <person name="Yamamoto H."/>
            <person name="Yamane K."/>
            <person name="Yasumoto K."/>
            <person name="Yata K."/>
            <person name="Yoshida K."/>
            <person name="Yoshikawa H.-F."/>
            <person name="Zumstein E."/>
            <person name="Yoshikawa H."/>
            <person name="Danchin A."/>
        </authorList>
    </citation>
    <scope>NUCLEOTIDE SEQUENCE [LARGE SCALE GENOMIC DNA]</scope>
    <source>
        <strain>168</strain>
    </source>
</reference>
<reference key="2">
    <citation type="journal article" date="2000" name="Microbiology">
        <title>Proteome analysis of Bacillus subtilis extracellular proteins: a two-dimensional protein electrophoretic study.</title>
        <authorList>
            <person name="Hirose I."/>
            <person name="Sano K."/>
            <person name="Shioda I."/>
            <person name="Kumano M."/>
            <person name="Nakamura K."/>
            <person name="Yamane K."/>
        </authorList>
    </citation>
    <scope>PROTEIN SEQUENCE OF 27-37</scope>
    <scope>SUBCELLULAR LOCATION</scope>
    <source>
        <strain>168</strain>
    </source>
</reference>
<reference key="3">
    <citation type="journal article" date="2007" name="Appl. Microbiol. Biotechnol.">
        <title>Recombinant expression and characterization of XynD from Bacillus subtilis subsp. subtilis ATCC 6051: a GH 43 arabinoxylan arabinofuranohydrolase.</title>
        <authorList>
            <person name="Bourgois T.M."/>
            <person name="Van Craeyveld V."/>
            <person name="Van Campenhout S."/>
            <person name="Courtin C.M."/>
            <person name="Delcour J.A."/>
            <person name="Robben J."/>
            <person name="Volckaert G."/>
        </authorList>
    </citation>
    <scope>FUNCTION</scope>
    <scope>BIOPHYSICOCHEMICAL PROPERTIES</scope>
    <scope>MASS SPECTROMETRY</scope>
    <source>
        <strain>168 / Marburg / ATCC 6051 / DSM 10 / JCM 1465 / NBRC 13719 / NCIMB 3610 / NRRL NRS-744 / VKM B-501</strain>
    </source>
</reference>
<reference key="4">
    <citation type="journal article" date="2009" name="Biochem. J.">
        <title>Structural analysis of a glycoside hydrolase family 43 arabinoxylan arabinofuranohydrolase in complex with xylotetraose reveals a different binding mechanism compared with other members of the same family.</title>
        <authorList>
            <person name="Vandermarliere E."/>
            <person name="Bourgois T.M."/>
            <person name="Winn M.D."/>
            <person name="van Campenhout S."/>
            <person name="Volckaert G."/>
            <person name="Delcour J.A."/>
            <person name="Strelkov S.V."/>
            <person name="Rabijns A."/>
            <person name="Courtin C.M."/>
        </authorList>
    </citation>
    <scope>X-RAY CRYSTALLOGRAPHY (1.55 ANGSTROMS) OF 27-513 IN COMPLEXES WITH XYLOTRIOSE; XYLOTETRAOSE; ARABINOXYLO-OLIGOSACCHARIDES AND CELLOTETRAOSE</scope>
    <scope>ACTIVE SITE</scope>
    <source>
        <strain>168 / Marburg / ATCC 6051 / DSM 10 / JCM 1465 / NBRC 13719 / NCIMB 3610 / NRRL NRS-744 / VKM B-501</strain>
    </source>
</reference>
<keyword id="KW-0002">3D-structure</keyword>
<keyword id="KW-0106">Calcium</keyword>
<keyword id="KW-0119">Carbohydrate metabolism</keyword>
<keyword id="KW-0903">Direct protein sequencing</keyword>
<keyword id="KW-0326">Glycosidase</keyword>
<keyword id="KW-0378">Hydrolase</keyword>
<keyword id="KW-0479">Metal-binding</keyword>
<keyword id="KW-0624">Polysaccharide degradation</keyword>
<keyword id="KW-1185">Reference proteome</keyword>
<keyword id="KW-0964">Secreted</keyword>
<keyword id="KW-0732">Signal</keyword>
<keyword id="KW-0858">Xylan degradation</keyword>
<sequence>MRKKCSVCLWILVLLLSCLSGKSAYAATSTTIAKHIGNSNPLIDHHLGADPVALTYNGRVYIYMSSDDYEYNSNGTIKDNSFANLNRVFVISSADMVNWTDHGAIPVAGANGANGGRGIAKWAGASWAPSIAVKKINGKDKFFLYFANSGGGIGVLTADSPIGPWTDPIGKPLVTPSTPGMSGVVWLFDPAVFVDDDGTGYLYAGGGVPGVSNPTQGQWANPKTARVIKLGPDMTSVVGSASTIDAPFMFEDSGLHKYNGTYYYSYCINFGGTHPADKPPGEIGYMTSSSPMGPFTYRGHFLKNPGAFFGGGGNNHHAVFNFKNEWYVVYHAQTVSSALFGAGKGYRSPHINKLVHNADGSIQEVAANYAGVTQISNLNPYNRVEAETFAWNGRILTEKSTAPGGPVNNQHVTSIQNGDWIAVGNADFGAGGARSFKANVASTLGGKIEVRLDSADGKLVGTLNVPSTGGAQTWREIETAVSGATGVHKVFFVFTGTGTGNLFNFDYWQFTQR</sequence>